<protein>
    <recommendedName>
        <fullName>Attachment protein G3P</fullName>
    </recommendedName>
    <alternativeName>
        <fullName>Gene 3 protein</fullName>
        <shortName>G3P</shortName>
    </alternativeName>
    <alternativeName>
        <fullName>Minor coat protein</fullName>
    </alternativeName>
</protein>
<organismHost>
    <name type="scientific">Escherichia coli</name>
    <dbReference type="NCBI Taxonomy" id="562"/>
</organismHost>
<name>G3P_BPIKE</name>
<organism>
    <name type="scientific">Salmonella phage IKe</name>
    <name type="common">Bacteriophage IKe</name>
    <dbReference type="NCBI Taxonomy" id="10867"/>
    <lineage>
        <taxon>Viruses</taxon>
        <taxon>Monodnaviria</taxon>
        <taxon>Loebvirae</taxon>
        <taxon>Hofneiviricota</taxon>
        <taxon>Faserviricetes</taxon>
        <taxon>Tubulavirales</taxon>
        <taxon>Inoviridae</taxon>
        <taxon>Lineavirus</taxon>
        <taxon>Lineavirus IKe</taxon>
    </lineage>
</organism>
<sequence length="434" mass="45575">MKRKIIAISLFLYIPLSNADNWESITKSYYTGFAISKTVESKDKDGKPVRKEVITQADLTTACNDAKASAQNVFNQIKLTLSGTWPNSQFRLVTGDTCVYNGSPGEKTESWSIRAQVEGDIQRSVPDEEPSEQTPEEICEAKPPIDGVFNNVFKGDEGGFYINYNGCEYEATGVTVCQNDGTVCSSSAWKPTGYVPESGEPSSSPLKDGDTGGTGEGGSDTGGDTGGGDTGGGSTGGDTGGSSGGGSSGGGSSGGSTGKSLTKEDVTAAIHVASPSIGDAVKDSLTEDNDQYDNQKKADEQSAKASASVSDAISDGMRGVGNFVDDFGGESSQYGTGNSEMDLSVSLAKGQLGIDREGHGSAWESFLNDGALRPSIPTGHGCTNFVMYQGSVYQIEIGCDKLNDIKSVLSWVMYCLTFWYVFQSVTSLLRKGEQ</sequence>
<comment type="function">
    <text evidence="1 4">Plays essential roles both in the penetration of the viral genome into the bacterial host via pilus retraction and in the extrusion process (By similarity). During the initial step of infection, G3P mediates adsorption of the phage to its primary receptor, the tip of host F-pilus (PubMed:22591114). Attachment of the phage causes pilus retraction bringing the viral particle into close proximity of the host cell inner membrane (By similarity). Subsequent interaction with the host entry receptors TolA (low affinity) and penetration of the viral DNA into the host cytoplasm (PubMed:22591114). In the extrusion process, G3P mediates the release of the membrane-anchored virion from the cell via its C-terminal domain (By similarity).</text>
</comment>
<comment type="subunit">
    <text evidence="1">Interacts with G6P; this interaction is required for proper integration of G3P and G6P into the virion (By similarity). Interacts with G8P. Interacts with the tip of the host pilus. Interacts (via N-terminus) with host TolA (By similarity).</text>
</comment>
<comment type="subcellular location">
    <subcellularLocation>
        <location evidence="5">Virion</location>
    </subcellularLocation>
    <subcellularLocation>
        <location evidence="5">Host membrane</location>
        <topology evidence="5">Single-pass type I membrane protein</topology>
    </subcellularLocation>
    <text>Prior to assembly, G3P is found associated with the bacterial host inner membrane. There are about five copies of this protein per mature phage that are located on the head side of the filamentous virion.</text>
</comment>
<comment type="domain">
    <text evidence="4">Consists of 3 domains (N1/D1, N2/D2, and CT), a glycine-rich repeats and a C-terminal transmembrane segment (PubMed:22591114). The N2 domain interacts with the F pilus, whereas the N1 domain forms a complex with the C-terminal domain of TolA although with low affinity (PubMed:22591114). The pilus and TolA binding domains are independent of each other in stability and folding (PubMed:22591114).</text>
</comment>
<comment type="similarity">
    <text evidence="5">Belongs to the inovirus G3P protein family.</text>
</comment>
<gene>
    <name type="primary">III</name>
</gene>
<reference key="1">
    <citation type="journal article" date="1985" name="J. Mol. Biol.">
        <title>Nucleotide sequence and genetic organization of the genome of the N-specific filamentous bacteriophage IKe. Comparison with the genome of the F-specific filamentous phages M13, fd and f1.</title>
        <authorList>
            <person name="Peeters B.P.H."/>
            <person name="Peters R.M."/>
            <person name="Schoenmakers J.G.G."/>
            <person name="Konings R.N.H."/>
        </authorList>
    </citation>
    <scope>NUCLEOTIDE SEQUENCE [GENOMIC DNA]</scope>
</reference>
<reference evidence="6 7" key="2">
    <citation type="journal article" date="2012" name="Mol. Microbiol.">
        <title>Structural and energetic basis of infection by the filamentous bacteriophage IKe.</title>
        <authorList>
            <person name="Jakob R.P."/>
            <person name="Geitner A.J."/>
            <person name="Weininger U."/>
            <person name="Balbach J."/>
            <person name="Dobbek H."/>
            <person name="Schmid F.X."/>
        </authorList>
    </citation>
    <scope>X-RAY CRYSTALLOGRAPHY (1.61 ANGSTROMS) OF 20-127</scope>
    <scope>DISULFIDE BONDS</scope>
    <scope>DOMAIN</scope>
</reference>
<accession>P03663</accession>
<dbReference type="EMBL" id="X02139">
    <property type="protein sequence ID" value="CAA26073.1"/>
    <property type="molecule type" value="Genomic_DNA"/>
</dbReference>
<dbReference type="PIR" id="A04267">
    <property type="entry name" value="Z3BPIK"/>
</dbReference>
<dbReference type="RefSeq" id="NP_040576.1">
    <property type="nucleotide sequence ID" value="NC_002014.1"/>
</dbReference>
<dbReference type="PDB" id="4EO0">
    <property type="method" value="X-ray"/>
    <property type="resolution" value="1.61 A"/>
    <property type="chains" value="A=20-127"/>
</dbReference>
<dbReference type="PDB" id="4EO1">
    <property type="method" value="X-ray"/>
    <property type="resolution" value="1.80 A"/>
    <property type="chains" value="A=130-199"/>
</dbReference>
<dbReference type="PDBsum" id="4EO0"/>
<dbReference type="PDBsum" id="4EO1"/>
<dbReference type="SMR" id="P03663"/>
<dbReference type="TCDB" id="1.B.53.1.3">
    <property type="family name" value="the filamentous phage g3p channel-forming protein (fp-g3p) family"/>
</dbReference>
<dbReference type="GeneID" id="1260884"/>
<dbReference type="KEGG" id="vg:1260884"/>
<dbReference type="OrthoDB" id="29620at10239"/>
<dbReference type="EvolutionaryTrace" id="P03663"/>
<dbReference type="Proteomes" id="UP000000372">
    <property type="component" value="Genome"/>
</dbReference>
<dbReference type="GO" id="GO:0033644">
    <property type="term" value="C:host cell membrane"/>
    <property type="evidence" value="ECO:0007669"/>
    <property type="project" value="UniProtKB-SubCell"/>
</dbReference>
<dbReference type="GO" id="GO:0016020">
    <property type="term" value="C:membrane"/>
    <property type="evidence" value="ECO:0007669"/>
    <property type="project" value="UniProtKB-KW"/>
</dbReference>
<dbReference type="GO" id="GO:0019028">
    <property type="term" value="C:viral capsid"/>
    <property type="evidence" value="ECO:0007669"/>
    <property type="project" value="UniProtKB-KW"/>
</dbReference>
<dbReference type="GO" id="GO:0098671">
    <property type="term" value="P:adhesion receptor-mediated virion attachment to host cell"/>
    <property type="evidence" value="ECO:0007669"/>
    <property type="project" value="UniProtKB-KW"/>
</dbReference>
<dbReference type="GO" id="GO:0098670">
    <property type="term" value="P:entry receptor-mediated virion attachment to host cell"/>
    <property type="evidence" value="ECO:0007669"/>
    <property type="project" value="UniProtKB-KW"/>
</dbReference>
<dbReference type="GO" id="GO:0099045">
    <property type="term" value="P:viral extrusion"/>
    <property type="evidence" value="ECO:0007669"/>
    <property type="project" value="UniProtKB-KW"/>
</dbReference>
<dbReference type="GO" id="GO:0039666">
    <property type="term" value="P:virion attachment to host cell pilus"/>
    <property type="evidence" value="ECO:0007669"/>
    <property type="project" value="UniProtKB-KW"/>
</dbReference>
<dbReference type="Gene3D" id="3.30.110.160">
    <property type="match status" value="1"/>
</dbReference>
<dbReference type="Gene3D" id="2.30.27.10">
    <property type="entry name" value="Phage FD Coat Protein,Membrane penetration domain"/>
    <property type="match status" value="1"/>
</dbReference>
<dbReference type="InterPro" id="IPR008021">
    <property type="entry name" value="Attachment_G3P_N"/>
</dbReference>
<dbReference type="InterPro" id="IPR036200">
    <property type="entry name" value="Attachment_G3P_N_sf"/>
</dbReference>
<dbReference type="Pfam" id="PF21443">
    <property type="entry name" value="G3P_pilus-bind"/>
    <property type="match status" value="1"/>
</dbReference>
<dbReference type="Pfam" id="PF05357">
    <property type="entry name" value="Phage_Coat_A"/>
    <property type="match status" value="1"/>
</dbReference>
<dbReference type="SUPFAM" id="SSF50176">
    <property type="entry name" value="N-terminal domains of the minor coat protein g3p"/>
    <property type="match status" value="1"/>
</dbReference>
<feature type="signal peptide" evidence="2">
    <location>
        <begin position="1"/>
        <end position="19"/>
    </location>
</feature>
<feature type="chain" id="PRO_0000003292" description="Attachment protein G3P">
    <location>
        <begin position="20"/>
        <end position="434"/>
    </location>
</feature>
<feature type="transmembrane region" description="Helical" evidence="2">
    <location>
        <begin position="408"/>
        <end position="429"/>
    </location>
</feature>
<feature type="region of interest" description="N1" evidence="4">
    <location>
        <begin position="20"/>
        <end position="130"/>
    </location>
</feature>
<feature type="region of interest" description="G1 (Gly-rich linker)" evidence="1">
    <location>
        <begin position="89"/>
        <end position="107"/>
    </location>
</feature>
<feature type="region of interest" description="N2" evidence="4">
    <location>
        <begin position="132"/>
        <end position="200"/>
    </location>
</feature>
<feature type="region of interest" description="Disordered" evidence="3">
    <location>
        <begin position="191"/>
        <end position="260"/>
    </location>
</feature>
<feature type="region of interest" description="Gly-rich linker">
    <location>
        <begin position="209"/>
        <end position="258"/>
    </location>
</feature>
<feature type="region of interest" description="CT" evidence="1">
    <location>
        <begin position="252"/>
        <end position="434"/>
    </location>
</feature>
<feature type="region of interest" description="CT" evidence="5">
    <location>
        <begin position="259"/>
        <end position="434"/>
    </location>
</feature>
<feature type="compositionally biased region" description="Gly residues" evidence="3">
    <location>
        <begin position="211"/>
        <end position="257"/>
    </location>
</feature>
<feature type="disulfide bond" evidence="4 6">
    <location>
        <begin position="63"/>
        <end position="98"/>
    </location>
</feature>
<feature type="disulfide bond" evidence="4 7">
    <location>
        <begin position="139"/>
        <end position="167"/>
    </location>
</feature>
<feature type="disulfide bond" evidence="4 7">
    <location>
        <begin position="177"/>
        <end position="184"/>
    </location>
</feature>
<feature type="strand" evidence="8">
    <location>
        <begin position="22"/>
        <end position="35"/>
    </location>
</feature>
<feature type="strand" evidence="8">
    <location>
        <begin position="37"/>
        <end position="42"/>
    </location>
</feature>
<feature type="strand" evidence="8">
    <location>
        <begin position="48"/>
        <end position="54"/>
    </location>
</feature>
<feature type="helix" evidence="8">
    <location>
        <begin position="56"/>
        <end position="84"/>
    </location>
</feature>
<feature type="strand" evidence="8">
    <location>
        <begin position="90"/>
        <end position="94"/>
    </location>
</feature>
<feature type="strand" evidence="8">
    <location>
        <begin position="99"/>
        <end position="102"/>
    </location>
</feature>
<feature type="strand" evidence="8">
    <location>
        <begin position="104"/>
        <end position="109"/>
    </location>
</feature>
<feature type="strand" evidence="8">
    <location>
        <begin position="112"/>
        <end position="124"/>
    </location>
</feature>
<feature type="helix" evidence="9">
    <location>
        <begin position="135"/>
        <end position="141"/>
    </location>
</feature>
<feature type="strand" evidence="9">
    <location>
        <begin position="145"/>
        <end position="151"/>
    </location>
</feature>
<feature type="strand" evidence="9">
    <location>
        <begin position="160"/>
        <end position="164"/>
    </location>
</feature>
<feature type="strand" evidence="9">
    <location>
        <begin position="167"/>
        <end position="170"/>
    </location>
</feature>
<feature type="strand" evidence="9">
    <location>
        <begin position="173"/>
        <end position="177"/>
    </location>
</feature>
<feature type="strand" evidence="9">
    <location>
        <begin position="179"/>
        <end position="182"/>
    </location>
</feature>
<feature type="strand" evidence="9">
    <location>
        <begin position="184"/>
        <end position="191"/>
    </location>
</feature>
<proteinExistence type="evidence at protein level"/>
<keyword id="KW-0002">3D-structure</keyword>
<keyword id="KW-0167">Capsid protein</keyword>
<keyword id="KW-1015">Disulfide bond</keyword>
<keyword id="KW-1043">Host membrane</keyword>
<keyword id="KW-0945">Host-virus interaction</keyword>
<keyword id="KW-0472">Membrane</keyword>
<keyword id="KW-1185">Reference proteome</keyword>
<keyword id="KW-0732">Signal</keyword>
<keyword id="KW-0812">Transmembrane</keyword>
<keyword id="KW-1133">Transmembrane helix</keyword>
<keyword id="KW-1233">Viral attachment to host adhesion receptor</keyword>
<keyword id="KW-1161">Viral attachment to host cell</keyword>
<keyword id="KW-1175">Viral attachment to host cell pilus</keyword>
<keyword id="KW-1234">Viral attachment to host entry receptor</keyword>
<keyword id="KW-1249">Viral extrusion</keyword>
<keyword id="KW-1162">Viral penetration into host cytoplasm</keyword>
<keyword id="KW-1241">Viral penetration into host cytoplasm via pilus retraction</keyword>
<keyword id="KW-1188">Viral release from host cell</keyword>
<keyword id="KW-0946">Virion</keyword>
<keyword id="KW-1160">Virus entry into host cell</keyword>
<evidence type="ECO:0000250" key="1">
    <source>
        <dbReference type="UniProtKB" id="P03661"/>
    </source>
</evidence>
<evidence type="ECO:0000255" key="2"/>
<evidence type="ECO:0000256" key="3">
    <source>
        <dbReference type="SAM" id="MobiDB-lite"/>
    </source>
</evidence>
<evidence type="ECO:0000269" key="4">
    <source>
    </source>
</evidence>
<evidence type="ECO:0000305" key="5"/>
<evidence type="ECO:0007744" key="6">
    <source>
        <dbReference type="PDB" id="4EO0"/>
    </source>
</evidence>
<evidence type="ECO:0007744" key="7">
    <source>
        <dbReference type="PDB" id="4EO1"/>
    </source>
</evidence>
<evidence type="ECO:0007829" key="8">
    <source>
        <dbReference type="PDB" id="4EO0"/>
    </source>
</evidence>
<evidence type="ECO:0007829" key="9">
    <source>
        <dbReference type="PDB" id="4EO1"/>
    </source>
</evidence>